<accession>Q5PBR8</accession>
<gene>
    <name evidence="1" type="primary">secB</name>
    <name type="ordered locus">AM114</name>
</gene>
<dbReference type="EMBL" id="CP000030">
    <property type="protein sequence ID" value="AAV86261.1"/>
    <property type="molecule type" value="Genomic_DNA"/>
</dbReference>
<dbReference type="SMR" id="Q5PBR8"/>
<dbReference type="KEGG" id="ama:AM114"/>
<dbReference type="HOGENOM" id="CLU_111574_0_0_5"/>
<dbReference type="GO" id="GO:0005737">
    <property type="term" value="C:cytoplasm"/>
    <property type="evidence" value="ECO:0007669"/>
    <property type="project" value="UniProtKB-SubCell"/>
</dbReference>
<dbReference type="GO" id="GO:0051082">
    <property type="term" value="F:unfolded protein binding"/>
    <property type="evidence" value="ECO:0007669"/>
    <property type="project" value="InterPro"/>
</dbReference>
<dbReference type="GO" id="GO:0006457">
    <property type="term" value="P:protein folding"/>
    <property type="evidence" value="ECO:0007669"/>
    <property type="project" value="UniProtKB-UniRule"/>
</dbReference>
<dbReference type="GO" id="GO:0051262">
    <property type="term" value="P:protein tetramerization"/>
    <property type="evidence" value="ECO:0007669"/>
    <property type="project" value="InterPro"/>
</dbReference>
<dbReference type="GO" id="GO:0015031">
    <property type="term" value="P:protein transport"/>
    <property type="evidence" value="ECO:0007669"/>
    <property type="project" value="UniProtKB-UniRule"/>
</dbReference>
<dbReference type="Gene3D" id="3.10.420.10">
    <property type="entry name" value="SecB-like"/>
    <property type="match status" value="1"/>
</dbReference>
<dbReference type="HAMAP" id="MF_00821">
    <property type="entry name" value="SecB"/>
    <property type="match status" value="1"/>
</dbReference>
<dbReference type="InterPro" id="IPR003708">
    <property type="entry name" value="SecB"/>
</dbReference>
<dbReference type="InterPro" id="IPR035958">
    <property type="entry name" value="SecB-like_sf"/>
</dbReference>
<dbReference type="NCBIfam" id="NF004392">
    <property type="entry name" value="PRK05751.1-3"/>
    <property type="match status" value="1"/>
</dbReference>
<dbReference type="NCBIfam" id="TIGR00809">
    <property type="entry name" value="secB"/>
    <property type="match status" value="1"/>
</dbReference>
<dbReference type="PANTHER" id="PTHR36918">
    <property type="match status" value="1"/>
</dbReference>
<dbReference type="PANTHER" id="PTHR36918:SF1">
    <property type="entry name" value="PROTEIN-EXPORT PROTEIN SECB"/>
    <property type="match status" value="1"/>
</dbReference>
<dbReference type="Pfam" id="PF02556">
    <property type="entry name" value="SecB"/>
    <property type="match status" value="1"/>
</dbReference>
<dbReference type="SUPFAM" id="SSF54611">
    <property type="entry name" value="SecB-like"/>
    <property type="match status" value="1"/>
</dbReference>
<organism>
    <name type="scientific">Anaplasma marginale (strain St. Maries)</name>
    <dbReference type="NCBI Taxonomy" id="234826"/>
    <lineage>
        <taxon>Bacteria</taxon>
        <taxon>Pseudomonadati</taxon>
        <taxon>Pseudomonadota</taxon>
        <taxon>Alphaproteobacteria</taxon>
        <taxon>Rickettsiales</taxon>
        <taxon>Anaplasmataceae</taxon>
        <taxon>Anaplasma</taxon>
    </lineage>
</organism>
<protein>
    <recommendedName>
        <fullName evidence="1">Protein-export protein SecB</fullName>
    </recommendedName>
</protein>
<comment type="function">
    <text evidence="1">One of the proteins required for the normal export of preproteins out of the cell cytoplasm. It is a molecular chaperone that binds to a subset of precursor proteins, maintaining them in a translocation-competent state. It also specifically binds to its receptor SecA.</text>
</comment>
<comment type="subunit">
    <text evidence="1">Homotetramer, a dimer of dimers. One homotetramer interacts with 1 SecA dimer.</text>
</comment>
<comment type="subcellular location">
    <subcellularLocation>
        <location evidence="1">Cytoplasm</location>
    </subcellularLocation>
</comment>
<comment type="similarity">
    <text evidence="1">Belongs to the SecB family.</text>
</comment>
<reference key="1">
    <citation type="journal article" date="2005" name="Proc. Natl. Acad. Sci. U.S.A.">
        <title>Complete genome sequencing of Anaplasma marginale reveals that the surface is skewed to two superfamilies of outer membrane proteins.</title>
        <authorList>
            <person name="Brayton K.A."/>
            <person name="Kappmeyer L.S."/>
            <person name="Herndon D.R."/>
            <person name="Dark M.J."/>
            <person name="Tibbals D.L."/>
            <person name="Palmer G.H."/>
            <person name="McGuire T.C."/>
            <person name="Knowles D.P. Jr."/>
        </authorList>
    </citation>
    <scope>NUCLEOTIDE SEQUENCE [LARGE SCALE GENOMIC DNA]</scope>
    <source>
        <strain>St. Maries</strain>
    </source>
</reference>
<proteinExistence type="inferred from homology"/>
<keyword id="KW-0143">Chaperone</keyword>
<keyword id="KW-0963">Cytoplasm</keyword>
<keyword id="KW-0653">Protein transport</keyword>
<keyword id="KW-0811">Translocation</keyword>
<keyword id="KW-0813">Transport</keyword>
<feature type="chain" id="PRO_0000055343" description="Protein-export protein SecB">
    <location>
        <begin position="1"/>
        <end position="175"/>
    </location>
</feature>
<evidence type="ECO:0000255" key="1">
    <source>
        <dbReference type="HAMAP-Rule" id="MF_00821"/>
    </source>
</evidence>
<name>SECB_ANAMM</name>
<sequence length="175" mass="18992">MRYCRLGVSSMRPKLKVRGQYIKDLSFENPNSPKVFLMISKSPPEISISVNVSSASLPVKPTEGEQAAADLYEVTLQVNIESVVEKVPAFLCELKYCGVFSLEEKAEEQVVKEALLITAPGVLFPFVREVIAKMTASAGFPPLMLDVIDFEAMYASQLGGDDGKNKQANKSGGAA</sequence>